<sequence length="384" mass="41459">MTAMEGASGSSFGIDTILSGAGSGSPGMMNGDFRSLGEARTTDFRSQATPSPCSEIDTVGTAPSSPISVTLEPPEPHLVTDGPQHHHHLHHSQQPPPPSAVPAQSLQPSPQQQPPPQPQSAAQQLGSAAAAPRTSTSSFLIKDILGDSKPLAACAPYSTSVSSPHHTPKQESNAAHESFRPKLEQEDGKTKLDKREDPQSDIKCHGTKEEGDREITSSRESPPVRAKKPRKARTAFSDHQLNQLERSFERQKYLSVQDRMDLAAALNLTDTQVKTWYQNRRTKWKRQTAVGLELLAEAGNYSALQRMFPSPYFYHPSLLGSMDSTTAAAAAAAMYSSMYRTPPAPHPQLQRPLVPRVLIHGLGPGGQPALNPLSNPIPGTPHPR</sequence>
<name>BARH2_MOUSE</name>
<dbReference type="EMBL" id="BC078444">
    <property type="protein sequence ID" value="AAH78444.1"/>
    <property type="molecule type" value="mRNA"/>
</dbReference>
<dbReference type="EMBL" id="AB063281">
    <property type="protein sequence ID" value="BAB79292.1"/>
    <property type="molecule type" value="Genomic_DNA"/>
</dbReference>
<dbReference type="CCDS" id="CCDS19497.1"/>
<dbReference type="RefSeq" id="NP_001005477.1">
    <property type="nucleotide sequence ID" value="NM_001005477.1"/>
</dbReference>
<dbReference type="SMR" id="Q8VIB5"/>
<dbReference type="FunCoup" id="Q8VIB5">
    <property type="interactions" value="1167"/>
</dbReference>
<dbReference type="STRING" id="10090.ENSMUSP00000084005"/>
<dbReference type="GlyGen" id="Q8VIB5">
    <property type="glycosylation" value="1 site"/>
</dbReference>
<dbReference type="iPTMnet" id="Q8VIB5"/>
<dbReference type="PhosphoSitePlus" id="Q8VIB5"/>
<dbReference type="PaxDb" id="10090-ENSMUSP00000084005"/>
<dbReference type="ProteomicsDB" id="277162"/>
<dbReference type="Antibodypedia" id="19858">
    <property type="antibodies" value="74 antibodies from 23 providers"/>
</dbReference>
<dbReference type="DNASU" id="104382"/>
<dbReference type="Ensembl" id="ENSMUST00000086795.8">
    <property type="protein sequence ID" value="ENSMUSP00000084005.7"/>
    <property type="gene ID" value="ENSMUSG00000034384.12"/>
</dbReference>
<dbReference type="GeneID" id="104382"/>
<dbReference type="KEGG" id="mmu:104382"/>
<dbReference type="UCSC" id="uc008ylm.1">
    <property type="organism name" value="mouse"/>
</dbReference>
<dbReference type="AGR" id="MGI:1859314"/>
<dbReference type="CTD" id="343472"/>
<dbReference type="MGI" id="MGI:1859314">
    <property type="gene designation" value="Barhl2"/>
</dbReference>
<dbReference type="VEuPathDB" id="HostDB:ENSMUSG00000034384"/>
<dbReference type="eggNOG" id="KOG0488">
    <property type="taxonomic scope" value="Eukaryota"/>
</dbReference>
<dbReference type="GeneTree" id="ENSGT00940000158611"/>
<dbReference type="HOGENOM" id="CLU_074592_0_0_1"/>
<dbReference type="InParanoid" id="Q8VIB5"/>
<dbReference type="OMA" id="DLKCHGT"/>
<dbReference type="OrthoDB" id="6159439at2759"/>
<dbReference type="PhylomeDB" id="Q8VIB5"/>
<dbReference type="TreeFam" id="TF316128"/>
<dbReference type="BioGRID-ORCS" id="104382">
    <property type="hits" value="4 hits in 77 CRISPR screens"/>
</dbReference>
<dbReference type="ChiTaRS" id="Barhl2">
    <property type="organism name" value="mouse"/>
</dbReference>
<dbReference type="PRO" id="PR:Q8VIB5"/>
<dbReference type="Proteomes" id="UP000000589">
    <property type="component" value="Chromosome 5"/>
</dbReference>
<dbReference type="RNAct" id="Q8VIB5">
    <property type="molecule type" value="protein"/>
</dbReference>
<dbReference type="Bgee" id="ENSMUSG00000034384">
    <property type="expression patterns" value="Expressed in future spinal cord and 130 other cell types or tissues"/>
</dbReference>
<dbReference type="GO" id="GO:0005634">
    <property type="term" value="C:nucleus"/>
    <property type="evidence" value="ECO:0000314"/>
    <property type="project" value="MGI"/>
</dbReference>
<dbReference type="GO" id="GO:0001228">
    <property type="term" value="F:DNA-binding transcription activator activity, RNA polymerase II-specific"/>
    <property type="evidence" value="ECO:0000314"/>
    <property type="project" value="MGI"/>
</dbReference>
<dbReference type="GO" id="GO:1990837">
    <property type="term" value="F:sequence-specific double-stranded DNA binding"/>
    <property type="evidence" value="ECO:0007669"/>
    <property type="project" value="Ensembl"/>
</dbReference>
<dbReference type="GO" id="GO:0035881">
    <property type="term" value="P:amacrine cell differentiation"/>
    <property type="evidence" value="ECO:0000314"/>
    <property type="project" value="MGI"/>
</dbReference>
<dbReference type="GO" id="GO:0045165">
    <property type="term" value="P:cell fate commitment"/>
    <property type="evidence" value="ECO:0000314"/>
    <property type="project" value="MGI"/>
</dbReference>
<dbReference type="GO" id="GO:0001709">
    <property type="term" value="P:cell fate determination"/>
    <property type="evidence" value="ECO:0000315"/>
    <property type="project" value="MGI"/>
</dbReference>
<dbReference type="GO" id="GO:0030182">
    <property type="term" value="P:neuron differentiation"/>
    <property type="evidence" value="ECO:0000315"/>
    <property type="project" value="MGI"/>
</dbReference>
<dbReference type="GO" id="GO:0001764">
    <property type="term" value="P:neuron migration"/>
    <property type="evidence" value="ECO:0000315"/>
    <property type="project" value="MGI"/>
</dbReference>
<dbReference type="GO" id="GO:0045944">
    <property type="term" value="P:positive regulation of transcription by RNA polymerase II"/>
    <property type="evidence" value="ECO:0000314"/>
    <property type="project" value="MGI"/>
</dbReference>
<dbReference type="GO" id="GO:0045727">
    <property type="term" value="P:positive regulation of translation"/>
    <property type="evidence" value="ECO:0000315"/>
    <property type="project" value="MGI"/>
</dbReference>
<dbReference type="GO" id="GO:0030516">
    <property type="term" value="P:regulation of axon extension"/>
    <property type="evidence" value="ECO:0000315"/>
    <property type="project" value="MGI"/>
</dbReference>
<dbReference type="CDD" id="cd00086">
    <property type="entry name" value="homeodomain"/>
    <property type="match status" value="1"/>
</dbReference>
<dbReference type="FunFam" id="1.10.10.60:FF:000097">
    <property type="entry name" value="barH-like 2 homeobox protein-like"/>
    <property type="match status" value="1"/>
</dbReference>
<dbReference type="Gene3D" id="1.10.10.60">
    <property type="entry name" value="Homeodomain-like"/>
    <property type="match status" value="1"/>
</dbReference>
<dbReference type="InterPro" id="IPR001356">
    <property type="entry name" value="HD"/>
</dbReference>
<dbReference type="InterPro" id="IPR020479">
    <property type="entry name" value="HD_metazoa"/>
</dbReference>
<dbReference type="InterPro" id="IPR017970">
    <property type="entry name" value="Homeobox_CS"/>
</dbReference>
<dbReference type="InterPro" id="IPR050848">
    <property type="entry name" value="Homeobox_TF"/>
</dbReference>
<dbReference type="InterPro" id="IPR009057">
    <property type="entry name" value="Homeodomain-like_sf"/>
</dbReference>
<dbReference type="PANTHER" id="PTHR24333">
    <property type="entry name" value="HOMEO BOX HB9 LIKE A-RELATED"/>
    <property type="match status" value="1"/>
</dbReference>
<dbReference type="PANTHER" id="PTHR24333:SF5">
    <property type="entry name" value="VENT HOMEOBOX"/>
    <property type="match status" value="1"/>
</dbReference>
<dbReference type="Pfam" id="PF00046">
    <property type="entry name" value="Homeodomain"/>
    <property type="match status" value="1"/>
</dbReference>
<dbReference type="PRINTS" id="PR00024">
    <property type="entry name" value="HOMEOBOX"/>
</dbReference>
<dbReference type="SMART" id="SM00389">
    <property type="entry name" value="HOX"/>
    <property type="match status" value="1"/>
</dbReference>
<dbReference type="SUPFAM" id="SSF46689">
    <property type="entry name" value="Homeodomain-like"/>
    <property type="match status" value="1"/>
</dbReference>
<dbReference type="PROSITE" id="PS00027">
    <property type="entry name" value="HOMEOBOX_1"/>
    <property type="match status" value="1"/>
</dbReference>
<dbReference type="PROSITE" id="PS50071">
    <property type="entry name" value="HOMEOBOX_2"/>
    <property type="match status" value="1"/>
</dbReference>
<accession>Q8VIB5</accession>
<accession>Q66L43</accession>
<protein>
    <recommendedName>
        <fullName>BarH-like 2 homeobox protein</fullName>
    </recommendedName>
    <alternativeName>
        <fullName>Bar-class homeodomain protein MBH1</fullName>
    </alternativeName>
    <alternativeName>
        <fullName>Homeobox protein B-H1</fullName>
    </alternativeName>
</protein>
<comment type="function">
    <text evidence="1">Potential regulator of neural basic helix-loop-helix genes. It may down-regulate expression of ASCL1 and, within the thalamus, up-regulate NGN2, thereby regulating distinct patterns of neuronal differentiation (By similarity).</text>
</comment>
<comment type="subcellular location">
    <subcellularLocation>
        <location evidence="2">Nucleus</location>
    </subcellularLocation>
</comment>
<comment type="similarity">
    <text evidence="4">Belongs to the BAR homeobox family.</text>
</comment>
<keyword id="KW-0217">Developmental protein</keyword>
<keyword id="KW-0238">DNA-binding</keyword>
<keyword id="KW-0371">Homeobox</keyword>
<keyword id="KW-0539">Nucleus</keyword>
<keyword id="KW-1185">Reference proteome</keyword>
<keyword id="KW-0804">Transcription</keyword>
<keyword id="KW-0805">Transcription regulation</keyword>
<proteinExistence type="evidence at transcript level"/>
<reference key="1">
    <citation type="journal article" date="2004" name="Genome Res.">
        <title>The status, quality, and expansion of the NIH full-length cDNA project: the Mammalian Gene Collection (MGC).</title>
        <authorList>
            <consortium name="The MGC Project Team"/>
        </authorList>
    </citation>
    <scope>NUCLEOTIDE SEQUENCE [LARGE SCALE MRNA]</scope>
    <source>
        <strain>C57BL/6J</strain>
        <tissue>Brain</tissue>
    </source>
</reference>
<reference key="2">
    <citation type="submission" date="2001-06" db="EMBL/GenBank/DDBJ databases">
        <title>Genomic structure, chromosomal localization, and mouse mammalian Barh1 gene.</title>
        <authorList>
            <person name="Saba R."/>
            <person name="Hama T."/>
            <person name="Nakatsuji N."/>
            <person name="Saito T."/>
        </authorList>
    </citation>
    <scope>NUCLEOTIDE SEQUENCE [MRNA] OF 1-205</scope>
    <source>
        <strain>129/SvJ</strain>
        <tissue>Liver</tissue>
    </source>
</reference>
<organism>
    <name type="scientific">Mus musculus</name>
    <name type="common">Mouse</name>
    <dbReference type="NCBI Taxonomy" id="10090"/>
    <lineage>
        <taxon>Eukaryota</taxon>
        <taxon>Metazoa</taxon>
        <taxon>Chordata</taxon>
        <taxon>Craniata</taxon>
        <taxon>Vertebrata</taxon>
        <taxon>Euteleostomi</taxon>
        <taxon>Mammalia</taxon>
        <taxon>Eutheria</taxon>
        <taxon>Euarchontoglires</taxon>
        <taxon>Glires</taxon>
        <taxon>Rodentia</taxon>
        <taxon>Myomorpha</taxon>
        <taxon>Muroidea</taxon>
        <taxon>Muridae</taxon>
        <taxon>Murinae</taxon>
        <taxon>Mus</taxon>
        <taxon>Mus</taxon>
    </lineage>
</organism>
<feature type="chain" id="PRO_0000048830" description="BarH-like 2 homeobox protein">
    <location>
        <begin position="1"/>
        <end position="384"/>
    </location>
</feature>
<feature type="DNA-binding region" description="Homeobox" evidence="2">
    <location>
        <begin position="229"/>
        <end position="288"/>
    </location>
</feature>
<feature type="region of interest" description="Disordered" evidence="3">
    <location>
        <begin position="1"/>
        <end position="134"/>
    </location>
</feature>
<feature type="region of interest" description="Disordered" evidence="3">
    <location>
        <begin position="154"/>
        <end position="235"/>
    </location>
</feature>
<feature type="region of interest" description="Disordered" evidence="3">
    <location>
        <begin position="364"/>
        <end position="384"/>
    </location>
</feature>
<feature type="compositionally biased region" description="Low complexity" evidence="3">
    <location>
        <begin position="101"/>
        <end position="110"/>
    </location>
</feature>
<feature type="compositionally biased region" description="Low complexity" evidence="3">
    <location>
        <begin position="119"/>
        <end position="134"/>
    </location>
</feature>
<feature type="compositionally biased region" description="Polar residues" evidence="3">
    <location>
        <begin position="157"/>
        <end position="175"/>
    </location>
</feature>
<feature type="compositionally biased region" description="Basic and acidic residues" evidence="3">
    <location>
        <begin position="177"/>
        <end position="217"/>
    </location>
</feature>
<gene>
    <name type="primary">Barhl2</name>
    <name type="synonym">Barh1</name>
    <name type="synonym">Mbh1</name>
</gene>
<evidence type="ECO:0000250" key="1"/>
<evidence type="ECO:0000255" key="2">
    <source>
        <dbReference type="PROSITE-ProRule" id="PRU00108"/>
    </source>
</evidence>
<evidence type="ECO:0000256" key="3">
    <source>
        <dbReference type="SAM" id="MobiDB-lite"/>
    </source>
</evidence>
<evidence type="ECO:0000305" key="4"/>